<proteinExistence type="evidence at transcript level"/>
<keyword id="KW-0349">Heme</keyword>
<keyword id="KW-0408">Iron</keyword>
<keyword id="KW-0472">Membrane</keyword>
<keyword id="KW-0479">Metal-binding</keyword>
<keyword id="KW-0503">Monooxygenase</keyword>
<keyword id="KW-0560">Oxidoreductase</keyword>
<keyword id="KW-0812">Transmembrane</keyword>
<keyword id="KW-1133">Transmembrane helix</keyword>
<comment type="function">
    <text evidence="1">Catalyzes the first oxidative step of the phenylpropanoid pathway in higher plants by transforming trans-cinnamate into p-coumarate (By similarity). The compounds formed by this pathway are essential components for lignification, pollination, and defense against ultraviolet light, predators and pathogens (By similarity).</text>
</comment>
<comment type="catalytic activity">
    <reaction evidence="1">
        <text>(E)-cinnamate + reduced [NADPH--hemoprotein reductase] + O2 = (E)-4-coumarate + oxidized [NADPH--hemoprotein reductase] + H2O + H(+)</text>
        <dbReference type="Rhea" id="RHEA:10608"/>
        <dbReference type="Rhea" id="RHEA-COMP:11964"/>
        <dbReference type="Rhea" id="RHEA-COMP:11965"/>
        <dbReference type="ChEBI" id="CHEBI:12876"/>
        <dbReference type="ChEBI" id="CHEBI:15377"/>
        <dbReference type="ChEBI" id="CHEBI:15378"/>
        <dbReference type="ChEBI" id="CHEBI:15379"/>
        <dbReference type="ChEBI" id="CHEBI:15669"/>
        <dbReference type="ChEBI" id="CHEBI:57618"/>
        <dbReference type="ChEBI" id="CHEBI:58210"/>
        <dbReference type="EC" id="1.14.14.91"/>
    </reaction>
</comment>
<comment type="cofactor">
    <cofactor evidence="2">
        <name>heme</name>
        <dbReference type="ChEBI" id="CHEBI:30413"/>
    </cofactor>
</comment>
<comment type="pathway">
    <text evidence="4">Phenylpropanoid metabolism; trans-4-coumarate biosynthesis; trans-4-coumarate from trans-cinnamate: step 1/1.</text>
</comment>
<comment type="subcellular location">
    <subcellularLocation>
        <location evidence="3">Membrane</location>
        <topology evidence="3">Single-pass membrane protein</topology>
    </subcellularLocation>
</comment>
<comment type="induction">
    <text>By wounding.</text>
</comment>
<comment type="similarity">
    <text evidence="4">Belongs to the cytochrome P450 family.</text>
</comment>
<name>TCMO_PEA</name>
<accession>Q43067</accession>
<accession>Q9FVK9</accession>
<evidence type="ECO:0000250" key="1">
    <source>
        <dbReference type="UniProtKB" id="Q04468"/>
    </source>
</evidence>
<evidence type="ECO:0000250" key="2">
    <source>
        <dbReference type="UniProtKB" id="Q94IP1"/>
    </source>
</evidence>
<evidence type="ECO:0000255" key="3"/>
<evidence type="ECO:0000305" key="4"/>
<sequence>MDLLLLEKTLLALFLAAITAITISKLRGKPFKLPPGPFPVPVFGNWLQVGDDLNHRNLTDLAKRFAEILLLRMEQRNLVVISSPELAKEVLHTQGVEFGSRTRNVVFDIFTGKGQDIVFTVYGEHWRKMRRIMTVPFFTNKVVQQYRFGWESEAASVVDDVKKNSKASVNGIVIRRRLQLMMYNIMYRIMFDRRFESEEDPLFVKLKALNGERSRLAQSFEYNYGDFIPILRPFLKGYLKVCKEVKDRRLQLFKDYFVDERKKLGSTKSTYNEGLKCAIDHILDAQKKGEINDDNVLYIVENINVAAIETTLWSIEWGIAELVNHQEIQNKLREEMDKVLGPGHQVTEPDLEKLPYLQAVIKETLRLRMAIPLLVPHMNLHDAKLGGFDIPAESKILVNAWWLANNPALWKKPEEFRPERFLEEEAHVEANGNDFRYLPFGVGRRSCPGIILALPILGITIGRLVQNFELLPPPGQSKIDTSEKGGQFSLHILKHSTIVAKPRAF</sequence>
<organism>
    <name type="scientific">Pisum sativum</name>
    <name type="common">Garden pea</name>
    <name type="synonym">Lathyrus oleraceus</name>
    <dbReference type="NCBI Taxonomy" id="3888"/>
    <lineage>
        <taxon>Eukaryota</taxon>
        <taxon>Viridiplantae</taxon>
        <taxon>Streptophyta</taxon>
        <taxon>Embryophyta</taxon>
        <taxon>Tracheophyta</taxon>
        <taxon>Spermatophyta</taxon>
        <taxon>Magnoliopsida</taxon>
        <taxon>eudicotyledons</taxon>
        <taxon>Gunneridae</taxon>
        <taxon>Pentapetalae</taxon>
        <taxon>rosids</taxon>
        <taxon>fabids</taxon>
        <taxon>Fabales</taxon>
        <taxon>Fabaceae</taxon>
        <taxon>Papilionoideae</taxon>
        <taxon>50 kb inversion clade</taxon>
        <taxon>NPAAA clade</taxon>
        <taxon>Hologalegina</taxon>
        <taxon>IRL clade</taxon>
        <taxon>Fabeae</taxon>
        <taxon>Pisum</taxon>
    </lineage>
</organism>
<reference key="1">
    <citation type="journal article" date="2000" name="Plant Physiol.">
        <title>Molecular characterization of CYP73A9 and CYP82A1 P450 genes involved in plant defense in pea.</title>
        <authorList>
            <person name="Whitbred J.M."/>
            <person name="Schuler M.A."/>
        </authorList>
    </citation>
    <scope>NUCLEOTIDE SEQUENCE OF 1-497</scope>
    <source>
        <strain>cv. Little Marvel</strain>
        <tissue>Stem</tissue>
    </source>
</reference>
<reference key="2">
    <citation type="journal article" date="1996" name="Plant Physiol.">
        <title>Cloning of wound-induced cytochrome P450 monooxygenases expressed in pea.</title>
        <authorList>
            <person name="Frank M.R."/>
            <person name="Deyneka J.M."/>
            <person name="Schuler M.A."/>
        </authorList>
    </citation>
    <scope>NUCLEOTIDE SEQUENCE [MRNA] OF 3-505</scope>
    <source>
        <tissue>Stem</tissue>
    </source>
</reference>
<reference key="3">
    <citation type="submission" date="1999-05" db="EMBL/GenBank/DDBJ databases">
        <authorList>
            <person name="Schuler M.A."/>
        </authorList>
    </citation>
    <scope>SEQUENCE REVISION TO 208; 394; 404 AND 460</scope>
</reference>
<feature type="chain" id="PRO_0000052248" description="Trans-cinnamate 4-monooxygenase">
    <location>
        <begin position="1"/>
        <end position="505"/>
    </location>
</feature>
<feature type="transmembrane region" description="Helical" evidence="3">
    <location>
        <begin position="3"/>
        <end position="23"/>
    </location>
</feature>
<feature type="binding site" evidence="2">
    <location>
        <begin position="213"/>
        <end position="218"/>
    </location>
    <ligand>
        <name>(E)-cinnamate</name>
        <dbReference type="ChEBI" id="CHEBI:15669"/>
    </ligand>
</feature>
<feature type="binding site" evidence="2">
    <location>
        <position position="306"/>
    </location>
    <ligand>
        <name>(E)-cinnamate</name>
        <dbReference type="ChEBI" id="CHEBI:15669"/>
    </ligand>
</feature>
<feature type="binding site" description="axial binding residue" evidence="2">
    <location>
        <position position="447"/>
    </location>
    <ligand>
        <name>heme</name>
        <dbReference type="ChEBI" id="CHEBI:30413"/>
    </ligand>
    <ligandPart>
        <name>Fe</name>
        <dbReference type="ChEBI" id="CHEBI:18248"/>
    </ligandPart>
</feature>
<feature type="sequence conflict" description="In Ref. 1; AAG09205." evidence="4" ref="1">
    <original>Y</original>
    <variation>D</variation>
    <location>
        <position position="271"/>
    </location>
</feature>
<gene>
    <name type="primary">CYP73A9</name>
</gene>
<protein>
    <recommendedName>
        <fullName>Trans-cinnamate 4-monooxygenase</fullName>
        <ecNumber evidence="1">1.14.14.91</ecNumber>
    </recommendedName>
    <alternativeName>
        <fullName>Cinnamic acid 4-hydroxylase</fullName>
        <shortName>C4H</shortName>
        <shortName>CA4H</shortName>
    </alternativeName>
    <alternativeName>
        <fullName>Cytochrome P450 73</fullName>
    </alternativeName>
    <alternativeName>
        <fullName>Cytochrome P450C4H</fullName>
    </alternativeName>
</protein>
<dbReference type="EC" id="1.14.14.91" evidence="1"/>
<dbReference type="EMBL" id="AF175275">
    <property type="protein sequence ID" value="AAG09205.1"/>
    <property type="molecule type" value="Genomic_DNA"/>
</dbReference>
<dbReference type="EMBL" id="U29243">
    <property type="protein sequence ID" value="AAC49187.2"/>
    <property type="molecule type" value="mRNA"/>
</dbReference>
<dbReference type="PIR" id="T06522">
    <property type="entry name" value="T06522"/>
</dbReference>
<dbReference type="SMR" id="Q43067"/>
<dbReference type="UniPathway" id="UPA00825">
    <property type="reaction ID" value="UER00789"/>
</dbReference>
<dbReference type="GO" id="GO:0016020">
    <property type="term" value="C:membrane"/>
    <property type="evidence" value="ECO:0007669"/>
    <property type="project" value="UniProtKB-SubCell"/>
</dbReference>
<dbReference type="GO" id="GO:0020037">
    <property type="term" value="F:heme binding"/>
    <property type="evidence" value="ECO:0007669"/>
    <property type="project" value="InterPro"/>
</dbReference>
<dbReference type="GO" id="GO:0005506">
    <property type="term" value="F:iron ion binding"/>
    <property type="evidence" value="ECO:0007669"/>
    <property type="project" value="InterPro"/>
</dbReference>
<dbReference type="GO" id="GO:0016710">
    <property type="term" value="F:trans-cinnamate 4-monooxygenase activity"/>
    <property type="evidence" value="ECO:0007669"/>
    <property type="project" value="UniProtKB-EC"/>
</dbReference>
<dbReference type="GO" id="GO:0009808">
    <property type="term" value="P:lignin metabolic process"/>
    <property type="evidence" value="ECO:0007669"/>
    <property type="project" value="TreeGrafter"/>
</dbReference>
<dbReference type="CDD" id="cd11074">
    <property type="entry name" value="CYP73"/>
    <property type="match status" value="1"/>
</dbReference>
<dbReference type="FunFam" id="1.10.630.10:FF:000013">
    <property type="entry name" value="Trans-cinnamate 4-monooxygenase"/>
    <property type="match status" value="1"/>
</dbReference>
<dbReference type="Gene3D" id="1.10.630.10">
    <property type="entry name" value="Cytochrome P450"/>
    <property type="match status" value="1"/>
</dbReference>
<dbReference type="InterPro" id="IPR001128">
    <property type="entry name" value="Cyt_P450"/>
</dbReference>
<dbReference type="InterPro" id="IPR017972">
    <property type="entry name" value="Cyt_P450_CS"/>
</dbReference>
<dbReference type="InterPro" id="IPR002401">
    <property type="entry name" value="Cyt_P450_E_grp-I"/>
</dbReference>
<dbReference type="InterPro" id="IPR036396">
    <property type="entry name" value="Cyt_P450_sf"/>
</dbReference>
<dbReference type="PANTHER" id="PTHR47948">
    <property type="entry name" value="TRANS-CINNAMATE 4-MONOOXYGENASE"/>
    <property type="match status" value="1"/>
</dbReference>
<dbReference type="PANTHER" id="PTHR47948:SF4">
    <property type="entry name" value="TRANS-CINNAMATE 4-MONOOXYGENASE"/>
    <property type="match status" value="1"/>
</dbReference>
<dbReference type="Pfam" id="PF00067">
    <property type="entry name" value="p450"/>
    <property type="match status" value="1"/>
</dbReference>
<dbReference type="PRINTS" id="PR00463">
    <property type="entry name" value="EP450I"/>
</dbReference>
<dbReference type="PRINTS" id="PR00385">
    <property type="entry name" value="P450"/>
</dbReference>
<dbReference type="SUPFAM" id="SSF48264">
    <property type="entry name" value="Cytochrome P450"/>
    <property type="match status" value="1"/>
</dbReference>
<dbReference type="PROSITE" id="PS00086">
    <property type="entry name" value="CYTOCHROME_P450"/>
    <property type="match status" value="1"/>
</dbReference>